<sequence>MSIKAEEISSIIKQQIENYHSELKVSDVGTVTYIGDGIARAHGLDNAMAGELLEFSNGVMGMAQNLETNDVGIIILGPYTEIREGDEVRRTGKIMEVPVGEALIGRVVNSLGQPVDGLGPIETTGTRPIEAVAPGVMQRQSVNEPLQTGIKAIDALVPIGRGQRELIIGDRQTGKTSVAIDTILNQADQDMICIYVAIGQKESTVRNAVETLRHHGALDYTIVVTAAASQPAPLLYLAPYAGVAMAEEFMYNGKHVLVVYDDLSKQAAAYRELSLLLRRPPGREAYPGDVFYLHSRLLERAAKLNDSLGGGSITALPFVETQAGDISAYIPTNVISITDGQIFLQSDLFFSGVRPAINAGLSVSRVGGSAQIKAMKTVAGTLRLDLAAYRELESFSQFGSDLDAATRAKLERGKRTVEVLKQDLHKPLKVEKQVLILYALVHKYLDDVPVHDVLRFESEMNTWFDHNHPELLEEIRTTKKLPDEAKLEAALKEFKNTFVPSEEK</sequence>
<comment type="function">
    <text evidence="1">Produces ATP from ADP in the presence of a proton gradient across the membrane. The alpha chain is a regulatory subunit.</text>
</comment>
<comment type="catalytic activity">
    <reaction evidence="1">
        <text>ATP + H2O + 4 H(+)(in) = ADP + phosphate + 5 H(+)(out)</text>
        <dbReference type="Rhea" id="RHEA:57720"/>
        <dbReference type="ChEBI" id="CHEBI:15377"/>
        <dbReference type="ChEBI" id="CHEBI:15378"/>
        <dbReference type="ChEBI" id="CHEBI:30616"/>
        <dbReference type="ChEBI" id="CHEBI:43474"/>
        <dbReference type="ChEBI" id="CHEBI:456216"/>
        <dbReference type="EC" id="7.1.2.2"/>
    </reaction>
</comment>
<comment type="subunit">
    <text evidence="1">F-type ATPases have 2 components, CF(1) - the catalytic core - and CF(0) - the membrane proton channel. CF(1) has five subunits: alpha(3), beta(3), gamma(1), delta(1), epsilon(1). CF(0) has three main subunits: a(1), b(2) and c(9-12). The alpha and beta chains form an alternating ring which encloses part of the gamma chain. CF(1) is attached to CF(0) by a central stalk formed by the gamma and epsilon chains, while a peripheral stalk is formed by the delta and b chains.</text>
</comment>
<comment type="subcellular location">
    <subcellularLocation>
        <location evidence="1">Cell membrane</location>
        <topology evidence="1">Peripheral membrane protein</topology>
    </subcellularLocation>
</comment>
<comment type="similarity">
    <text evidence="1">Belongs to the ATPase alpha/beta chains family.</text>
</comment>
<keyword id="KW-0066">ATP synthesis</keyword>
<keyword id="KW-0067">ATP-binding</keyword>
<keyword id="KW-1003">Cell membrane</keyword>
<keyword id="KW-0139">CF(1)</keyword>
<keyword id="KW-0375">Hydrogen ion transport</keyword>
<keyword id="KW-0406">Ion transport</keyword>
<keyword id="KW-0472">Membrane</keyword>
<keyword id="KW-0547">Nucleotide-binding</keyword>
<keyword id="KW-1185">Reference proteome</keyword>
<keyword id="KW-1278">Translocase</keyword>
<keyword id="KW-0813">Transport</keyword>
<feature type="chain" id="PRO_0000238280" description="ATP synthase subunit alpha 2">
    <location>
        <begin position="1"/>
        <end position="504"/>
    </location>
</feature>
<feature type="binding site" evidence="1">
    <location>
        <begin position="169"/>
        <end position="176"/>
    </location>
    <ligand>
        <name>ATP</name>
        <dbReference type="ChEBI" id="CHEBI:30616"/>
    </ligand>
</feature>
<feature type="site" description="Required for activity" evidence="1">
    <location>
        <position position="362"/>
    </location>
</feature>
<reference key="1">
    <citation type="journal article" date="2001" name="Science">
        <title>Comparative genomics of Listeria species.</title>
        <authorList>
            <person name="Glaser P."/>
            <person name="Frangeul L."/>
            <person name="Buchrieser C."/>
            <person name="Rusniok C."/>
            <person name="Amend A."/>
            <person name="Baquero F."/>
            <person name="Berche P."/>
            <person name="Bloecker H."/>
            <person name="Brandt P."/>
            <person name="Chakraborty T."/>
            <person name="Charbit A."/>
            <person name="Chetouani F."/>
            <person name="Couve E."/>
            <person name="de Daruvar A."/>
            <person name="Dehoux P."/>
            <person name="Domann E."/>
            <person name="Dominguez-Bernal G."/>
            <person name="Duchaud E."/>
            <person name="Durant L."/>
            <person name="Dussurget O."/>
            <person name="Entian K.-D."/>
            <person name="Fsihi H."/>
            <person name="Garcia-del Portillo F."/>
            <person name="Garrido P."/>
            <person name="Gautier L."/>
            <person name="Goebel W."/>
            <person name="Gomez-Lopez N."/>
            <person name="Hain T."/>
            <person name="Hauf J."/>
            <person name="Jackson D."/>
            <person name="Jones L.-M."/>
            <person name="Kaerst U."/>
            <person name="Kreft J."/>
            <person name="Kuhn M."/>
            <person name="Kunst F."/>
            <person name="Kurapkat G."/>
            <person name="Madueno E."/>
            <person name="Maitournam A."/>
            <person name="Mata Vicente J."/>
            <person name="Ng E."/>
            <person name="Nedjari H."/>
            <person name="Nordsiek G."/>
            <person name="Novella S."/>
            <person name="de Pablos B."/>
            <person name="Perez-Diaz J.-C."/>
            <person name="Purcell R."/>
            <person name="Remmel B."/>
            <person name="Rose M."/>
            <person name="Schlueter T."/>
            <person name="Simoes N."/>
            <person name="Tierrez A."/>
            <person name="Vazquez-Boland J.-A."/>
            <person name="Voss H."/>
            <person name="Wehland J."/>
            <person name="Cossart P."/>
        </authorList>
    </citation>
    <scope>NUCLEOTIDE SEQUENCE [LARGE SCALE GENOMIC DNA]</scope>
    <source>
        <strain>ATCC BAA-679 / EGD-e</strain>
    </source>
</reference>
<organism>
    <name type="scientific">Listeria monocytogenes serovar 1/2a (strain ATCC BAA-679 / EGD-e)</name>
    <dbReference type="NCBI Taxonomy" id="169963"/>
    <lineage>
        <taxon>Bacteria</taxon>
        <taxon>Bacillati</taxon>
        <taxon>Bacillota</taxon>
        <taxon>Bacilli</taxon>
        <taxon>Bacillales</taxon>
        <taxon>Listeriaceae</taxon>
        <taxon>Listeria</taxon>
    </lineage>
</organism>
<protein>
    <recommendedName>
        <fullName evidence="1">ATP synthase subunit alpha 2</fullName>
        <ecNumber evidence="1">7.1.2.2</ecNumber>
    </recommendedName>
    <alternativeName>
        <fullName evidence="1">ATP synthase F1 sector subunit alpha 2</fullName>
    </alternativeName>
    <alternativeName>
        <fullName evidence="1">F-ATPase subunit alpha 2</fullName>
    </alternativeName>
</protein>
<gene>
    <name evidence="1" type="primary">atpA2</name>
    <name type="ordered locus">lmo2531</name>
</gene>
<proteinExistence type="inferred from homology"/>
<dbReference type="EC" id="7.1.2.2" evidence="1"/>
<dbReference type="EMBL" id="AL591983">
    <property type="protein sequence ID" value="CAD00609.1"/>
    <property type="molecule type" value="Genomic_DNA"/>
</dbReference>
<dbReference type="PIR" id="AC1391">
    <property type="entry name" value="AC1391"/>
</dbReference>
<dbReference type="SMR" id="Q8Y4C0"/>
<dbReference type="STRING" id="169963.gene:17595242"/>
<dbReference type="PaxDb" id="169963-lmo2531"/>
<dbReference type="EnsemblBacteria" id="CAD00609">
    <property type="protein sequence ID" value="CAD00609"/>
    <property type="gene ID" value="CAD00609"/>
</dbReference>
<dbReference type="KEGG" id="lmo:lmo2531"/>
<dbReference type="PATRIC" id="fig|169963.11.peg.2592"/>
<dbReference type="eggNOG" id="COG0056">
    <property type="taxonomic scope" value="Bacteria"/>
</dbReference>
<dbReference type="HOGENOM" id="CLU_010091_2_1_9"/>
<dbReference type="OrthoDB" id="9803053at2"/>
<dbReference type="PhylomeDB" id="Q8Y4C0"/>
<dbReference type="BioCyc" id="LMON169963:LMO2531-MONOMER"/>
<dbReference type="Proteomes" id="UP000000817">
    <property type="component" value="Chromosome"/>
</dbReference>
<dbReference type="GO" id="GO:0005886">
    <property type="term" value="C:plasma membrane"/>
    <property type="evidence" value="ECO:0007669"/>
    <property type="project" value="UniProtKB-SubCell"/>
</dbReference>
<dbReference type="GO" id="GO:0045259">
    <property type="term" value="C:proton-transporting ATP synthase complex"/>
    <property type="evidence" value="ECO:0007669"/>
    <property type="project" value="UniProtKB-KW"/>
</dbReference>
<dbReference type="GO" id="GO:0043531">
    <property type="term" value="F:ADP binding"/>
    <property type="evidence" value="ECO:0000318"/>
    <property type="project" value="GO_Central"/>
</dbReference>
<dbReference type="GO" id="GO:0005524">
    <property type="term" value="F:ATP binding"/>
    <property type="evidence" value="ECO:0000318"/>
    <property type="project" value="GO_Central"/>
</dbReference>
<dbReference type="GO" id="GO:0046933">
    <property type="term" value="F:proton-transporting ATP synthase activity, rotational mechanism"/>
    <property type="evidence" value="ECO:0007669"/>
    <property type="project" value="UniProtKB-UniRule"/>
</dbReference>
<dbReference type="GO" id="GO:0015986">
    <property type="term" value="P:proton motive force-driven ATP synthesis"/>
    <property type="evidence" value="ECO:0000318"/>
    <property type="project" value="GO_Central"/>
</dbReference>
<dbReference type="CDD" id="cd18113">
    <property type="entry name" value="ATP-synt_F1_alpha_C"/>
    <property type="match status" value="1"/>
</dbReference>
<dbReference type="CDD" id="cd18116">
    <property type="entry name" value="ATP-synt_F1_alpha_N"/>
    <property type="match status" value="1"/>
</dbReference>
<dbReference type="CDD" id="cd01132">
    <property type="entry name" value="F1-ATPase_alpha_CD"/>
    <property type="match status" value="1"/>
</dbReference>
<dbReference type="FunFam" id="1.20.150.20:FF:000001">
    <property type="entry name" value="ATP synthase subunit alpha"/>
    <property type="match status" value="1"/>
</dbReference>
<dbReference type="FunFam" id="2.40.30.20:FF:000001">
    <property type="entry name" value="ATP synthase subunit alpha"/>
    <property type="match status" value="1"/>
</dbReference>
<dbReference type="FunFam" id="3.40.50.300:FF:000002">
    <property type="entry name" value="ATP synthase subunit alpha"/>
    <property type="match status" value="1"/>
</dbReference>
<dbReference type="Gene3D" id="2.40.30.20">
    <property type="match status" value="1"/>
</dbReference>
<dbReference type="Gene3D" id="1.20.150.20">
    <property type="entry name" value="ATP synthase alpha/beta chain, C-terminal domain"/>
    <property type="match status" value="1"/>
</dbReference>
<dbReference type="Gene3D" id="3.40.50.300">
    <property type="entry name" value="P-loop containing nucleotide triphosphate hydrolases"/>
    <property type="match status" value="1"/>
</dbReference>
<dbReference type="HAMAP" id="MF_01346">
    <property type="entry name" value="ATP_synth_alpha_bact"/>
    <property type="match status" value="1"/>
</dbReference>
<dbReference type="InterPro" id="IPR023366">
    <property type="entry name" value="ATP_synth_asu-like_sf"/>
</dbReference>
<dbReference type="InterPro" id="IPR000793">
    <property type="entry name" value="ATP_synth_asu_C"/>
</dbReference>
<dbReference type="InterPro" id="IPR038376">
    <property type="entry name" value="ATP_synth_asu_C_sf"/>
</dbReference>
<dbReference type="InterPro" id="IPR033732">
    <property type="entry name" value="ATP_synth_F1_a_nt-bd_dom"/>
</dbReference>
<dbReference type="InterPro" id="IPR005294">
    <property type="entry name" value="ATP_synth_F1_asu"/>
</dbReference>
<dbReference type="InterPro" id="IPR020003">
    <property type="entry name" value="ATPase_a/bsu_AS"/>
</dbReference>
<dbReference type="InterPro" id="IPR004100">
    <property type="entry name" value="ATPase_F1/V1/A1_a/bsu_N"/>
</dbReference>
<dbReference type="InterPro" id="IPR036121">
    <property type="entry name" value="ATPase_F1/V1/A1_a/bsu_N_sf"/>
</dbReference>
<dbReference type="InterPro" id="IPR000194">
    <property type="entry name" value="ATPase_F1/V1/A1_a/bsu_nucl-bd"/>
</dbReference>
<dbReference type="InterPro" id="IPR027417">
    <property type="entry name" value="P-loop_NTPase"/>
</dbReference>
<dbReference type="NCBIfam" id="TIGR00962">
    <property type="entry name" value="atpA"/>
    <property type="match status" value="1"/>
</dbReference>
<dbReference type="NCBIfam" id="NF009884">
    <property type="entry name" value="PRK13343.1"/>
    <property type="match status" value="1"/>
</dbReference>
<dbReference type="PANTHER" id="PTHR48082">
    <property type="entry name" value="ATP SYNTHASE SUBUNIT ALPHA, MITOCHONDRIAL"/>
    <property type="match status" value="1"/>
</dbReference>
<dbReference type="PANTHER" id="PTHR48082:SF2">
    <property type="entry name" value="ATP SYNTHASE SUBUNIT ALPHA, MITOCHONDRIAL"/>
    <property type="match status" value="1"/>
</dbReference>
<dbReference type="Pfam" id="PF00006">
    <property type="entry name" value="ATP-synt_ab"/>
    <property type="match status" value="1"/>
</dbReference>
<dbReference type="Pfam" id="PF00306">
    <property type="entry name" value="ATP-synt_ab_C"/>
    <property type="match status" value="1"/>
</dbReference>
<dbReference type="Pfam" id="PF02874">
    <property type="entry name" value="ATP-synt_ab_N"/>
    <property type="match status" value="1"/>
</dbReference>
<dbReference type="PIRSF" id="PIRSF039088">
    <property type="entry name" value="F_ATPase_subunit_alpha"/>
    <property type="match status" value="1"/>
</dbReference>
<dbReference type="SUPFAM" id="SSF47917">
    <property type="entry name" value="C-terminal domain of alpha and beta subunits of F1 ATP synthase"/>
    <property type="match status" value="1"/>
</dbReference>
<dbReference type="SUPFAM" id="SSF50615">
    <property type="entry name" value="N-terminal domain of alpha and beta subunits of F1 ATP synthase"/>
    <property type="match status" value="1"/>
</dbReference>
<dbReference type="SUPFAM" id="SSF52540">
    <property type="entry name" value="P-loop containing nucleoside triphosphate hydrolases"/>
    <property type="match status" value="1"/>
</dbReference>
<dbReference type="PROSITE" id="PS00152">
    <property type="entry name" value="ATPASE_ALPHA_BETA"/>
    <property type="match status" value="1"/>
</dbReference>
<name>ATPA2_LISMO</name>
<accession>Q8Y4C0</accession>
<evidence type="ECO:0000255" key="1">
    <source>
        <dbReference type="HAMAP-Rule" id="MF_01346"/>
    </source>
</evidence>